<evidence type="ECO:0000250" key="1"/>
<evidence type="ECO:0000250" key="2">
    <source>
        <dbReference type="UniProtKB" id="Q64438"/>
    </source>
</evidence>
<evidence type="ECO:0000250" key="3">
    <source>
        <dbReference type="UniProtKB" id="Q93091"/>
    </source>
</evidence>
<evidence type="ECO:0000250" key="4">
    <source>
        <dbReference type="UniProtKB" id="Q9H1E1"/>
    </source>
</evidence>
<evidence type="ECO:0000255" key="5"/>
<evidence type="ECO:0000269" key="6">
    <source>
    </source>
</evidence>
<evidence type="ECO:0000269" key="7">
    <source>
    </source>
</evidence>
<evidence type="ECO:0000305" key="8"/>
<name>RNAS6_BOVIN</name>
<reference key="1">
    <citation type="journal article" date="2000" name="DNA Seq.">
        <title>Complete cDNA sequence and amino acid analysis of a bovine ribonuclease K6 gene.</title>
        <authorList>
            <person name="Pietrowski D."/>
            <person name="Forster M."/>
        </authorList>
    </citation>
    <scope>NUCLEOTIDE SEQUENCE [MRNA]</scope>
    <source>
        <tissue>Spinal cord</tissue>
    </source>
</reference>
<reference key="2">
    <citation type="submission" date="2005-11" db="EMBL/GenBank/DDBJ databases">
        <authorList>
            <consortium name="NIH - Mammalian Gene Collection (MGC) project"/>
        </authorList>
    </citation>
    <scope>NUCLEOTIDE SEQUENCE [LARGE SCALE MRNA]</scope>
    <source>
        <strain>Crossbred X Angus</strain>
        <tissue>Liver</tissue>
    </source>
</reference>
<reference key="3">
    <citation type="journal article" date="1988" name="J. Biochem.">
        <title>Primary structure of a non-secretory ribonuclease from bovine kidney.</title>
        <authorList>
            <person name="Irie M."/>
            <person name="Nitta R."/>
            <person name="Ohgi K."/>
            <person name="Niwata Y."/>
            <person name="Watanabe H."/>
            <person name="Iwama M."/>
            <person name="Beintema J.J."/>
            <person name="Sanda A."/>
            <person name="Takizawa Y."/>
        </authorList>
    </citation>
    <scope>PROTEIN SEQUENCE OF 28-154</scope>
</reference>
<reference key="4">
    <citation type="journal article" date="1985" name="J. Biochem.">
        <title>Purification and properties of bovine kidney ribonucleases.</title>
        <authorList>
            <person name="Niwata Y."/>
            <person name="Ohgi K."/>
            <person name="Sanda A."/>
            <person name="Takizawa Y."/>
            <person name="Irie M."/>
        </authorList>
    </citation>
    <scope>PROTEIN SEQUENCE OF 28-57</scope>
    <scope>FUNCTION</scope>
    <scope>CATALYTIC ACTIVITY</scope>
    <scope>BIOPHYSICOCHEMICAL PROPERTIES</scope>
    <scope>TISSUE SPECIFICITY</scope>
    <source>
        <tissue>Kidney</tissue>
    </source>
</reference>
<reference key="5">
    <citation type="journal article" date="1996" name="Nucleic Acids Res.">
        <title>Molecular cloning and characterization of a novel human ribonuclease (RNase k6): increasing diversity in the enlarging ribonuclease gene family.</title>
        <authorList>
            <person name="Rosenberg H.F."/>
            <person name="Dyer K.D."/>
        </authorList>
    </citation>
    <scope>NUCLEOTIDE SEQUENCE [GENOMIC DNA] OF 37-129</scope>
</reference>
<organism>
    <name type="scientific">Bos taurus</name>
    <name type="common">Bovine</name>
    <dbReference type="NCBI Taxonomy" id="9913"/>
    <lineage>
        <taxon>Eukaryota</taxon>
        <taxon>Metazoa</taxon>
        <taxon>Chordata</taxon>
        <taxon>Craniata</taxon>
        <taxon>Vertebrata</taxon>
        <taxon>Euteleostomi</taxon>
        <taxon>Mammalia</taxon>
        <taxon>Eutheria</taxon>
        <taxon>Laurasiatheria</taxon>
        <taxon>Artiodactyla</taxon>
        <taxon>Ruminantia</taxon>
        <taxon>Pecora</taxon>
        <taxon>Bovidae</taxon>
        <taxon>Bovinae</taxon>
        <taxon>Bos</taxon>
    </lineage>
</organism>
<accession>P08904</accession>
<accession>Q32L16</accession>
<accession>Q95324</accession>
<accession>Q9TUP9</accession>
<proteinExistence type="evidence at protein level"/>
<dbReference type="EC" id="3.1.27.-" evidence="7"/>
<dbReference type="EMBL" id="AF164025">
    <property type="protein sequence ID" value="AAD44349.1"/>
    <property type="molecule type" value="mRNA"/>
</dbReference>
<dbReference type="EMBL" id="BC109812">
    <property type="protein sequence ID" value="AAI09813.1"/>
    <property type="molecule type" value="mRNA"/>
</dbReference>
<dbReference type="EMBL" id="U64997">
    <property type="protein sequence ID" value="AAC48633.1"/>
    <property type="molecule type" value="Genomic_DNA"/>
</dbReference>
<dbReference type="PIR" id="A05315">
    <property type="entry name" value="A05315"/>
</dbReference>
<dbReference type="PIR" id="S72363">
    <property type="entry name" value="S72363"/>
</dbReference>
<dbReference type="RefSeq" id="NP_777019.1">
    <property type="nucleotide sequence ID" value="NM_174594.2"/>
</dbReference>
<dbReference type="RefSeq" id="XP_010807378.1">
    <property type="nucleotide sequence ID" value="XM_010809076.3"/>
</dbReference>
<dbReference type="SMR" id="P08904"/>
<dbReference type="FunCoup" id="P08904">
    <property type="interactions" value="171"/>
</dbReference>
<dbReference type="STRING" id="9913.ENSBTAP00000011585"/>
<dbReference type="GlyCosmos" id="P08904">
    <property type="glycosylation" value="2 sites, No reported glycans"/>
</dbReference>
<dbReference type="GlyGen" id="P08904">
    <property type="glycosylation" value="2 sites"/>
</dbReference>
<dbReference type="PaxDb" id="9913-ENSBTAP00000011585"/>
<dbReference type="Ensembl" id="ENSBTAT00000011585.5">
    <property type="protein sequence ID" value="ENSBTAP00000011585.3"/>
    <property type="gene ID" value="ENSBTAG00000008792.5"/>
</dbReference>
<dbReference type="Ensembl" id="ENSBTAT00000110398.1">
    <property type="protein sequence ID" value="ENSBTAP00000080624.1"/>
    <property type="gene ID" value="ENSBTAG00000008792.5"/>
</dbReference>
<dbReference type="Ensembl" id="ENSBTAT00000130296.1">
    <property type="protein sequence ID" value="ENSBTAP00000101189.1"/>
    <property type="gene ID" value="ENSBTAG00000008792.5"/>
</dbReference>
<dbReference type="GeneID" id="282341"/>
<dbReference type="KEGG" id="bta:282341"/>
<dbReference type="CTD" id="6039"/>
<dbReference type="VEuPathDB" id="HostDB:ENSBTAG00000008792"/>
<dbReference type="VGNC" id="VGNC:33999">
    <property type="gene designation" value="RNASE6"/>
</dbReference>
<dbReference type="eggNOG" id="ENOG502TDZ3">
    <property type="taxonomic scope" value="Eukaryota"/>
</dbReference>
<dbReference type="GeneTree" id="ENSGT00940000161733"/>
<dbReference type="HOGENOM" id="CLU_117006_0_1_1"/>
<dbReference type="InParanoid" id="P08904"/>
<dbReference type="OMA" id="LTKAHWF"/>
<dbReference type="OrthoDB" id="9445034at2759"/>
<dbReference type="TreeFam" id="TF333393"/>
<dbReference type="Reactome" id="R-BTA-6803157">
    <property type="pathway name" value="Antimicrobial peptides"/>
</dbReference>
<dbReference type="Proteomes" id="UP000009136">
    <property type="component" value="Chromosome 10"/>
</dbReference>
<dbReference type="Bgee" id="ENSBTAG00000008792">
    <property type="expression patterns" value="Expressed in neutrophil and 108 other cell types or tissues"/>
</dbReference>
<dbReference type="GO" id="GO:0031410">
    <property type="term" value="C:cytoplasmic vesicle"/>
    <property type="evidence" value="ECO:0007669"/>
    <property type="project" value="Ensembl"/>
</dbReference>
<dbReference type="GO" id="GO:0005615">
    <property type="term" value="C:extracellular space"/>
    <property type="evidence" value="ECO:0000318"/>
    <property type="project" value="GO_Central"/>
</dbReference>
<dbReference type="GO" id="GO:0005764">
    <property type="term" value="C:lysosome"/>
    <property type="evidence" value="ECO:0007669"/>
    <property type="project" value="UniProtKB-SubCell"/>
</dbReference>
<dbReference type="GO" id="GO:0004519">
    <property type="term" value="F:endonuclease activity"/>
    <property type="evidence" value="ECO:0007669"/>
    <property type="project" value="UniProtKB-KW"/>
</dbReference>
<dbReference type="GO" id="GO:0003676">
    <property type="term" value="F:nucleic acid binding"/>
    <property type="evidence" value="ECO:0007669"/>
    <property type="project" value="InterPro"/>
</dbReference>
<dbReference type="GO" id="GO:0004540">
    <property type="term" value="F:RNA nuclease activity"/>
    <property type="evidence" value="ECO:0000318"/>
    <property type="project" value="GO_Central"/>
</dbReference>
<dbReference type="GO" id="GO:0019731">
    <property type="term" value="P:antibacterial humoral response"/>
    <property type="evidence" value="ECO:0000318"/>
    <property type="project" value="GO_Central"/>
</dbReference>
<dbReference type="GO" id="GO:0061844">
    <property type="term" value="P:antimicrobial humoral immune response mediated by antimicrobial peptide"/>
    <property type="evidence" value="ECO:0000318"/>
    <property type="project" value="GO_Central"/>
</dbReference>
<dbReference type="GO" id="GO:0050829">
    <property type="term" value="P:defense response to Gram-negative bacterium"/>
    <property type="evidence" value="ECO:0000318"/>
    <property type="project" value="GO_Central"/>
</dbReference>
<dbReference type="GO" id="GO:0050830">
    <property type="term" value="P:defense response to Gram-positive bacterium"/>
    <property type="evidence" value="ECO:0000318"/>
    <property type="project" value="GO_Central"/>
</dbReference>
<dbReference type="GO" id="GO:0051607">
    <property type="term" value="P:defense response to virus"/>
    <property type="evidence" value="ECO:0007669"/>
    <property type="project" value="Ensembl"/>
</dbReference>
<dbReference type="GO" id="GO:0045087">
    <property type="term" value="P:innate immune response"/>
    <property type="evidence" value="ECO:0000318"/>
    <property type="project" value="GO_Central"/>
</dbReference>
<dbReference type="CDD" id="cd06265">
    <property type="entry name" value="RNase_A_canonical"/>
    <property type="match status" value="1"/>
</dbReference>
<dbReference type="FunFam" id="3.10.130.10:FF:000001">
    <property type="entry name" value="Ribonuclease pancreatic"/>
    <property type="match status" value="1"/>
</dbReference>
<dbReference type="Gene3D" id="3.10.130.10">
    <property type="entry name" value="Ribonuclease A-like domain"/>
    <property type="match status" value="1"/>
</dbReference>
<dbReference type="InterPro" id="IPR001427">
    <property type="entry name" value="RNaseA"/>
</dbReference>
<dbReference type="InterPro" id="IPR036816">
    <property type="entry name" value="RNaseA-like_dom_sf"/>
</dbReference>
<dbReference type="InterPro" id="IPR023411">
    <property type="entry name" value="RNaseA_AS"/>
</dbReference>
<dbReference type="InterPro" id="IPR023412">
    <property type="entry name" value="RNaseA_domain"/>
</dbReference>
<dbReference type="PANTHER" id="PTHR11437">
    <property type="entry name" value="RIBONUCLEASE"/>
    <property type="match status" value="1"/>
</dbReference>
<dbReference type="PANTHER" id="PTHR11437:SF4">
    <property type="entry name" value="RIBONUCLEASE K6"/>
    <property type="match status" value="1"/>
</dbReference>
<dbReference type="Pfam" id="PF00074">
    <property type="entry name" value="RnaseA"/>
    <property type="match status" value="1"/>
</dbReference>
<dbReference type="PRINTS" id="PR00794">
    <property type="entry name" value="RIBONUCLEASE"/>
</dbReference>
<dbReference type="SMART" id="SM00092">
    <property type="entry name" value="RNAse_Pc"/>
    <property type="match status" value="1"/>
</dbReference>
<dbReference type="SUPFAM" id="SSF54076">
    <property type="entry name" value="RNase A-like"/>
    <property type="match status" value="1"/>
</dbReference>
<dbReference type="PROSITE" id="PS00127">
    <property type="entry name" value="RNASE_PANCREATIC"/>
    <property type="match status" value="1"/>
</dbReference>
<keyword id="KW-0044">Antibiotic</keyword>
<keyword id="KW-0929">Antimicrobial</keyword>
<keyword id="KW-0903">Direct protein sequencing</keyword>
<keyword id="KW-1015">Disulfide bond</keyword>
<keyword id="KW-0255">Endonuclease</keyword>
<keyword id="KW-0325">Glycoprotein</keyword>
<keyword id="KW-0378">Hydrolase</keyword>
<keyword id="KW-0458">Lysosome</keyword>
<keyword id="KW-0540">Nuclease</keyword>
<keyword id="KW-1185">Reference proteome</keyword>
<keyword id="KW-0964">Secreted</keyword>
<keyword id="KW-0732">Signal</keyword>
<gene>
    <name type="primary">RNASE6</name>
    <name type="synonym">RK6B</name>
    <name type="synonym">RNS6</name>
</gene>
<sequence length="154" mass="17661">MGPHLLGRSSLLLLLLGMWWSVRPLCAVPKGLTKARWFEIQHIQPRLLQCNKAMSGVNNYTQHCKPENTFLHNVFQDVTAVCDMPNIICKNGRHNCHQSPKPVNLTQCNFIAGRYPDCRYHDDAQYKFFIVACDPPQKTDPPYHLVPVHLDKVV</sequence>
<comment type="function">
    <text evidence="3 7">Ribonuclease which shows a preference for the pyrimidines uridine and cytosine (PubMed:3926759). Has potent antimicrobial activity against a range of Gram-positive and Gram-negative bacteria, including P.aeruginosa, A.baumanii, M.luteus, S.aureus, E.faecalis, E.faecium, S.saprophyticus and E.coli (By similarity). Causes loss of bacterial membrane integrity, and also promotes agglutination of Gram-negative bacteria (By similarity). Probably contributes to urinary tract sterility (By similarity). Bactericidal activity is independent of RNase activity (By similarity).</text>
</comment>
<comment type="biophysicochemical properties">
    <phDependence>
        <text evidence="7">Optimum pH is 6.5.</text>
    </phDependence>
    <temperatureDependence>
        <text evidence="7">Optimum temperature is 30 degrees Celsius. Activity declines with increasing temperature, with loss of stability at 90 degrees Celsius.</text>
    </temperatureDependence>
</comment>
<comment type="subunit">
    <text evidence="3">Interacts (via N-terminus) with bacterial lipopolysaccharide (LPS).</text>
</comment>
<comment type="subcellular location">
    <subcellularLocation>
        <location evidence="3">Secreted</location>
    </subcellularLocation>
    <subcellularLocation>
        <location evidence="3">Lysosome</location>
    </subcellularLocation>
    <subcellularLocation>
        <location evidence="3">Cytoplasmic granule</location>
    </subcellularLocation>
</comment>
<comment type="tissue specificity">
    <text evidence="7">Kidney (at protein level).</text>
</comment>
<comment type="similarity">
    <text evidence="8">Belongs to the pancreatic ribonuclease family.</text>
</comment>
<feature type="signal peptide" evidence="6 7">
    <location>
        <begin position="1"/>
        <end position="27"/>
    </location>
</feature>
<feature type="chain" id="PRO_0000030888" description="Ribonuclease K6">
    <location>
        <begin position="28"/>
        <end position="154"/>
    </location>
</feature>
<feature type="active site" description="Proton acceptor" evidence="2">
    <location>
        <position position="42"/>
    </location>
</feature>
<feature type="active site" description="Proton donor" evidence="2">
    <location>
        <position position="149"/>
    </location>
</feature>
<feature type="binding site" evidence="1">
    <location>
        <begin position="65"/>
        <end position="69"/>
    </location>
    <ligand>
        <name>substrate</name>
    </ligand>
</feature>
<feature type="binding site" evidence="1">
    <location>
        <position position="90"/>
    </location>
    <ligand>
        <name>substrate</name>
    </ligand>
</feature>
<feature type="site" description="Facilitates cleavage of polynucleotide substrates" evidence="3">
    <location>
        <position position="63"/>
    </location>
</feature>
<feature type="site" description="Critical for catalytic activity" evidence="4">
    <location>
        <position position="65"/>
    </location>
</feature>
<feature type="glycosylation site" description="N-linked (GlcNAc...) asparagine" evidence="5">
    <location>
        <position position="59"/>
    </location>
</feature>
<feature type="glycosylation site" description="N-linked (GlcNAc...) asparagine" evidence="5">
    <location>
        <position position="104"/>
    </location>
</feature>
<feature type="disulfide bond" evidence="3">
    <location>
        <begin position="50"/>
        <end position="108"/>
    </location>
</feature>
<feature type="disulfide bond" evidence="3">
    <location>
        <begin position="64"/>
        <end position="118"/>
    </location>
</feature>
<feature type="disulfide bond" evidence="3">
    <location>
        <begin position="82"/>
        <end position="133"/>
    </location>
</feature>
<feature type="disulfide bond" evidence="3">
    <location>
        <begin position="89"/>
        <end position="96"/>
    </location>
</feature>
<feature type="sequence conflict" description="In Ref. 4; AA sequence." evidence="8" ref="4">
    <original>PRLLQCN</original>
    <variation>SRIIPCS</variation>
    <location>
        <begin position="45"/>
        <end position="51"/>
    </location>
</feature>
<feature type="sequence conflict" description="In Ref. 5; AAC48633." evidence="8" ref="5">
    <original>K</original>
    <variation>N</variation>
    <location>
        <position position="65"/>
    </location>
</feature>
<feature type="sequence conflict" description="In Ref. 2; AAI09813." evidence="8" ref="2">
    <original>H</original>
    <variation>N</variation>
    <location>
        <position position="97"/>
    </location>
</feature>
<feature type="sequence conflict" description="In Ref. 3; AA sequence." evidence="8" ref="3">
    <original>VV</original>
    <variation>YF</variation>
    <location>
        <begin position="153"/>
        <end position="154"/>
    </location>
</feature>
<protein>
    <recommendedName>
        <fullName>Ribonuclease K6</fullName>
        <shortName>RNase K6</shortName>
        <ecNumber evidence="7">3.1.27.-</ecNumber>
    </recommendedName>
    <alternativeName>
        <fullName>K6b</fullName>
    </alternativeName>
    <alternativeName>
        <fullName>Ribonuclease K2</fullName>
        <shortName>RNase K2</shortName>
    </alternativeName>
</protein>